<comment type="function">
    <text evidence="1">Positive regulator required for L-tartrate-dependent anaerobic growth on glycerol. Induces expression of the ttdA-ttdB-ygjE operon (By similarity).</text>
</comment>
<comment type="similarity">
    <text evidence="3">Belongs to the LysR transcriptional regulatory family.</text>
</comment>
<name>TTDR_ECOL5</name>
<proteinExistence type="inferred from homology"/>
<gene>
    <name type="primary">ttdR</name>
    <name type="ordered locus">ECP_3150</name>
</gene>
<dbReference type="EMBL" id="CP000247">
    <property type="protein sequence ID" value="ABG71133.1"/>
    <property type="molecule type" value="Genomic_DNA"/>
</dbReference>
<dbReference type="RefSeq" id="WP_000935209.1">
    <property type="nucleotide sequence ID" value="NC_008253.1"/>
</dbReference>
<dbReference type="SMR" id="Q0TD46"/>
<dbReference type="KEGG" id="ecp:ECP_3150"/>
<dbReference type="HOGENOM" id="CLU_039613_16_4_6"/>
<dbReference type="Proteomes" id="UP000009182">
    <property type="component" value="Chromosome"/>
</dbReference>
<dbReference type="GO" id="GO:0003700">
    <property type="term" value="F:DNA-binding transcription factor activity"/>
    <property type="evidence" value="ECO:0007669"/>
    <property type="project" value="InterPro"/>
</dbReference>
<dbReference type="GO" id="GO:0043565">
    <property type="term" value="F:sequence-specific DNA binding"/>
    <property type="evidence" value="ECO:0007669"/>
    <property type="project" value="TreeGrafter"/>
</dbReference>
<dbReference type="GO" id="GO:0006351">
    <property type="term" value="P:DNA-templated transcription"/>
    <property type="evidence" value="ECO:0007669"/>
    <property type="project" value="TreeGrafter"/>
</dbReference>
<dbReference type="CDD" id="cd08479">
    <property type="entry name" value="PBP2_CrgA_like_9"/>
    <property type="match status" value="1"/>
</dbReference>
<dbReference type="FunFam" id="1.10.10.10:FF:000238">
    <property type="entry name" value="HTH-type transcriptional activator TtdR"/>
    <property type="match status" value="1"/>
</dbReference>
<dbReference type="FunFam" id="3.40.190.290:FF:000001">
    <property type="entry name" value="Transcriptional regulator, LysR family"/>
    <property type="match status" value="1"/>
</dbReference>
<dbReference type="Gene3D" id="3.40.190.290">
    <property type="match status" value="1"/>
</dbReference>
<dbReference type="Gene3D" id="1.10.10.10">
    <property type="entry name" value="Winged helix-like DNA-binding domain superfamily/Winged helix DNA-binding domain"/>
    <property type="match status" value="1"/>
</dbReference>
<dbReference type="InterPro" id="IPR005119">
    <property type="entry name" value="LysR_subst-bd"/>
</dbReference>
<dbReference type="InterPro" id="IPR000847">
    <property type="entry name" value="Tscrpt_reg_HTH_LysR"/>
</dbReference>
<dbReference type="InterPro" id="IPR036388">
    <property type="entry name" value="WH-like_DNA-bd_sf"/>
</dbReference>
<dbReference type="InterPro" id="IPR036390">
    <property type="entry name" value="WH_DNA-bd_sf"/>
</dbReference>
<dbReference type="NCBIfam" id="NF007315">
    <property type="entry name" value="PRK09801.1"/>
    <property type="match status" value="1"/>
</dbReference>
<dbReference type="PANTHER" id="PTHR30537:SF5">
    <property type="entry name" value="HTH-TYPE TRANSCRIPTIONAL ACTIVATOR TTDR-RELATED"/>
    <property type="match status" value="1"/>
</dbReference>
<dbReference type="PANTHER" id="PTHR30537">
    <property type="entry name" value="HTH-TYPE TRANSCRIPTIONAL REGULATOR"/>
    <property type="match status" value="1"/>
</dbReference>
<dbReference type="Pfam" id="PF00126">
    <property type="entry name" value="HTH_1"/>
    <property type="match status" value="1"/>
</dbReference>
<dbReference type="Pfam" id="PF03466">
    <property type="entry name" value="LysR_substrate"/>
    <property type="match status" value="1"/>
</dbReference>
<dbReference type="SUPFAM" id="SSF53850">
    <property type="entry name" value="Periplasmic binding protein-like II"/>
    <property type="match status" value="1"/>
</dbReference>
<dbReference type="SUPFAM" id="SSF46785">
    <property type="entry name" value="Winged helix' DNA-binding domain"/>
    <property type="match status" value="1"/>
</dbReference>
<dbReference type="PROSITE" id="PS50931">
    <property type="entry name" value="HTH_LYSR"/>
    <property type="match status" value="1"/>
</dbReference>
<protein>
    <recommendedName>
        <fullName>HTH-type transcriptional activator TtdR</fullName>
    </recommendedName>
</protein>
<sequence>MLNSWPLAKDLQVLVEIVHSGSFSAAAATLGQTPAFVTKRIQILENTLATTLLNRSARGVALTESGQRCYEHALEILTQYQRLVDDVTQIKTRPEGMIRIGCSFGFGRSHIAPAITELMRNYPELQVHFELFDRQIDLVQDNIDLDIRINDEIPDYYIAHLLTKNKRILCAAPEYLQKYPQPQSLQELSRHDCLVTKERDMTHGIWELGNGQEKKSVKVSGHLSSNSGEIVLQWALEGKGIMLRSEWDVLPFLESGKLVRVLPEYAQSANIWAVYREPLYRSMKLRVCVEFLAAWCQQRLGKPDEGYQVM</sequence>
<evidence type="ECO:0000250" key="1"/>
<evidence type="ECO:0000255" key="2">
    <source>
        <dbReference type="PROSITE-ProRule" id="PRU00253"/>
    </source>
</evidence>
<evidence type="ECO:0000305" key="3"/>
<keyword id="KW-0010">Activator</keyword>
<keyword id="KW-0238">DNA-binding</keyword>
<keyword id="KW-0804">Transcription</keyword>
<keyword id="KW-0805">Transcription regulation</keyword>
<feature type="chain" id="PRO_0000262708" description="HTH-type transcriptional activator TtdR">
    <location>
        <begin position="1"/>
        <end position="310"/>
    </location>
</feature>
<feature type="domain" description="HTH lysR-type" evidence="2">
    <location>
        <begin position="6"/>
        <end position="63"/>
    </location>
</feature>
<feature type="DNA-binding region" description="H-T-H motif" evidence="2">
    <location>
        <begin position="23"/>
        <end position="42"/>
    </location>
</feature>
<organism>
    <name type="scientific">Escherichia coli O6:K15:H31 (strain 536 / UPEC)</name>
    <dbReference type="NCBI Taxonomy" id="362663"/>
    <lineage>
        <taxon>Bacteria</taxon>
        <taxon>Pseudomonadati</taxon>
        <taxon>Pseudomonadota</taxon>
        <taxon>Gammaproteobacteria</taxon>
        <taxon>Enterobacterales</taxon>
        <taxon>Enterobacteriaceae</taxon>
        <taxon>Escherichia</taxon>
    </lineage>
</organism>
<reference key="1">
    <citation type="journal article" date="2006" name="Mol. Microbiol.">
        <title>Role of pathogenicity island-associated integrases in the genome plasticity of uropathogenic Escherichia coli strain 536.</title>
        <authorList>
            <person name="Hochhut B."/>
            <person name="Wilde C."/>
            <person name="Balling G."/>
            <person name="Middendorf B."/>
            <person name="Dobrindt U."/>
            <person name="Brzuszkiewicz E."/>
            <person name="Gottschalk G."/>
            <person name="Carniel E."/>
            <person name="Hacker J."/>
        </authorList>
    </citation>
    <scope>NUCLEOTIDE SEQUENCE [LARGE SCALE GENOMIC DNA]</scope>
    <source>
        <strain>536 / UPEC</strain>
    </source>
</reference>
<accession>Q0TD46</accession>